<reference key="1">
    <citation type="journal article" date="2003" name="Nat. Biotechnol.">
        <title>The genome sequence of the entomopathogenic bacterium Photorhabdus luminescens.</title>
        <authorList>
            <person name="Duchaud E."/>
            <person name="Rusniok C."/>
            <person name="Frangeul L."/>
            <person name="Buchrieser C."/>
            <person name="Givaudan A."/>
            <person name="Taourit S."/>
            <person name="Bocs S."/>
            <person name="Boursaux-Eude C."/>
            <person name="Chandler M."/>
            <person name="Charles J.-F."/>
            <person name="Dassa E."/>
            <person name="Derose R."/>
            <person name="Derzelle S."/>
            <person name="Freyssinet G."/>
            <person name="Gaudriault S."/>
            <person name="Medigue C."/>
            <person name="Lanois A."/>
            <person name="Powell K."/>
            <person name="Siguier P."/>
            <person name="Vincent R."/>
            <person name="Wingate V."/>
            <person name="Zouine M."/>
            <person name="Glaser P."/>
            <person name="Boemare N."/>
            <person name="Danchin A."/>
            <person name="Kunst F."/>
        </authorList>
    </citation>
    <scope>NUCLEOTIDE SEQUENCE [LARGE SCALE GENOMIC DNA]</scope>
    <source>
        <strain>DSM 15139 / CIP 105565 / TT01</strain>
    </source>
</reference>
<keyword id="KW-0963">Cytoplasm</keyword>
<keyword id="KW-0378">Hydrolase</keyword>
<keyword id="KW-0479">Metal-binding</keyword>
<keyword id="KW-0547">Nucleotide-binding</keyword>
<keyword id="KW-1185">Reference proteome</keyword>
<gene>
    <name type="ordered locus">plu3092</name>
</gene>
<proteinExistence type="inferred from homology"/>
<accession>Q7N2I4</accession>
<evidence type="ECO:0000255" key="1">
    <source>
        <dbReference type="HAMAP-Rule" id="MF_01100"/>
    </source>
</evidence>
<evidence type="ECO:0000255" key="2">
    <source>
        <dbReference type="PROSITE-ProRule" id="PRU01175"/>
    </source>
</evidence>
<evidence type="ECO:0000305" key="3"/>
<name>5DNU_PHOLL</name>
<protein>
    <recommendedName>
        <fullName evidence="1">5'-deoxynucleotidase plu3092</fullName>
        <ecNumber evidence="1">3.1.3.89</ecNumber>
    </recommendedName>
    <alternativeName>
        <fullName evidence="1">5'-deoxyribonucleotidase</fullName>
    </alternativeName>
    <alternativeName>
        <fullName evidence="1">Nucleoside 5'-monophosphate phosphohydrolase</fullName>
    </alternativeName>
</protein>
<organism>
    <name type="scientific">Photorhabdus laumondii subsp. laumondii (strain DSM 15139 / CIP 105565 / TT01)</name>
    <name type="common">Photorhabdus luminescens subsp. laumondii</name>
    <dbReference type="NCBI Taxonomy" id="243265"/>
    <lineage>
        <taxon>Bacteria</taxon>
        <taxon>Pseudomonadati</taxon>
        <taxon>Pseudomonadota</taxon>
        <taxon>Gammaproteobacteria</taxon>
        <taxon>Enterobacterales</taxon>
        <taxon>Morganellaceae</taxon>
        <taxon>Photorhabdus</taxon>
    </lineage>
</organism>
<sequence>MSHFFAHLSRLKLINRWPLMRNVRTENVSEHSLQVAFVAHALAIIKNRKFGGNVNAERIALLAMYHDASEVITGDLPTPVKYHNPHIAREYKKIEKIAQKKLLEMLPTELQEDFRPILDDSQHTTEETFIIKQADSLCAYLKCLEELSAGNHEFNLAIARLEKTLADRHSQEMDYFMKVFVPGFSLSLDEISLDIPH</sequence>
<comment type="function">
    <text evidence="1">Catalyzes the strictly specific dephosphorylation of 2'-deoxyribonucleoside 5'-monophosphates.</text>
</comment>
<comment type="catalytic activity">
    <reaction evidence="1">
        <text>a 2'-deoxyribonucleoside 5'-phosphate + H2O = a 2'-deoxyribonucleoside + phosphate</text>
        <dbReference type="Rhea" id="RHEA:36167"/>
        <dbReference type="ChEBI" id="CHEBI:15377"/>
        <dbReference type="ChEBI" id="CHEBI:18274"/>
        <dbReference type="ChEBI" id="CHEBI:43474"/>
        <dbReference type="ChEBI" id="CHEBI:65317"/>
        <dbReference type="EC" id="3.1.3.89"/>
    </reaction>
</comment>
<comment type="cofactor">
    <cofactor evidence="1">
        <name>a divalent metal cation</name>
        <dbReference type="ChEBI" id="CHEBI:60240"/>
    </cofactor>
</comment>
<comment type="subunit">
    <text evidence="1">Homodimer.</text>
</comment>
<comment type="subcellular location">
    <subcellularLocation>
        <location evidence="1">Cytoplasm</location>
    </subcellularLocation>
</comment>
<comment type="similarity">
    <text evidence="1">Belongs to the 5DNU family.</text>
</comment>
<comment type="sequence caution" evidence="3">
    <conflict type="erroneous initiation">
        <sequence resource="EMBL-CDS" id="CAE15466"/>
    </conflict>
    <text>Extended N-terminus.</text>
</comment>
<feature type="chain" id="PRO_0000095054" description="5'-deoxynucleotidase plu3092">
    <location>
        <begin position="1"/>
        <end position="197"/>
    </location>
</feature>
<feature type="domain" description="HD" evidence="2">
    <location>
        <begin position="28"/>
        <end position="140"/>
    </location>
</feature>
<feature type="binding site" evidence="1">
    <location>
        <begin position="16"/>
        <end position="17"/>
    </location>
    <ligand>
        <name>substrate</name>
    </ligand>
</feature>
<feature type="binding site" evidence="1">
    <location>
        <position position="31"/>
    </location>
    <ligand>
        <name>a divalent metal cation</name>
        <dbReference type="ChEBI" id="CHEBI:60240"/>
    </ligand>
</feature>
<feature type="binding site" evidence="1">
    <location>
        <position position="31"/>
    </location>
    <ligand>
        <name>substrate</name>
    </ligand>
</feature>
<feature type="binding site" evidence="1">
    <location>
        <position position="66"/>
    </location>
    <ligand>
        <name>a divalent metal cation</name>
        <dbReference type="ChEBI" id="CHEBI:60240"/>
    </ligand>
</feature>
<feature type="binding site" evidence="1">
    <location>
        <position position="67"/>
    </location>
    <ligand>
        <name>a divalent metal cation</name>
        <dbReference type="ChEBI" id="CHEBI:60240"/>
    </ligand>
</feature>
<feature type="binding site" evidence="1">
    <location>
        <position position="67"/>
    </location>
    <ligand>
        <name>substrate</name>
    </ligand>
</feature>
<feature type="binding site" evidence="1">
    <location>
        <begin position="75"/>
        <end position="78"/>
    </location>
    <ligand>
        <name>substrate</name>
    </ligand>
</feature>
<feature type="binding site" evidence="1">
    <location>
        <position position="135"/>
    </location>
    <ligand>
        <name>a divalent metal cation</name>
        <dbReference type="ChEBI" id="CHEBI:60240"/>
    </ligand>
</feature>
<feature type="binding site" evidence="1">
    <location>
        <position position="135"/>
    </location>
    <ligand>
        <name>substrate</name>
    </ligand>
</feature>
<feature type="site" description="Appears to be important in orienting the phosphate for catalysis" evidence="1">
    <location>
        <position position="16"/>
    </location>
</feature>
<dbReference type="EC" id="3.1.3.89" evidence="1"/>
<dbReference type="EMBL" id="BX571869">
    <property type="protein sequence ID" value="CAE15466.1"/>
    <property type="status" value="ALT_INIT"/>
    <property type="molecule type" value="Genomic_DNA"/>
</dbReference>
<dbReference type="RefSeq" id="WP_041380177.1">
    <property type="nucleotide sequence ID" value="NC_005126.1"/>
</dbReference>
<dbReference type="SMR" id="Q7N2I4"/>
<dbReference type="STRING" id="243265.plu3092"/>
<dbReference type="GeneID" id="48849353"/>
<dbReference type="KEGG" id="plu:plu3092"/>
<dbReference type="eggNOG" id="COG1896">
    <property type="taxonomic scope" value="Bacteria"/>
</dbReference>
<dbReference type="HOGENOM" id="CLU_084784_0_0_6"/>
<dbReference type="OrthoDB" id="9812744at2"/>
<dbReference type="Proteomes" id="UP000002514">
    <property type="component" value="Chromosome"/>
</dbReference>
<dbReference type="GO" id="GO:0005737">
    <property type="term" value="C:cytoplasm"/>
    <property type="evidence" value="ECO:0007669"/>
    <property type="project" value="UniProtKB-SubCell"/>
</dbReference>
<dbReference type="GO" id="GO:0002953">
    <property type="term" value="F:5'-deoxynucleotidase activity"/>
    <property type="evidence" value="ECO:0007669"/>
    <property type="project" value="UniProtKB-EC"/>
</dbReference>
<dbReference type="GO" id="GO:0046872">
    <property type="term" value="F:metal ion binding"/>
    <property type="evidence" value="ECO:0007669"/>
    <property type="project" value="UniProtKB-KW"/>
</dbReference>
<dbReference type="GO" id="GO:0000166">
    <property type="term" value="F:nucleotide binding"/>
    <property type="evidence" value="ECO:0007669"/>
    <property type="project" value="UniProtKB-KW"/>
</dbReference>
<dbReference type="FunFam" id="1.10.3210.10:FF:000002">
    <property type="entry name" value="Nucleotidase YfbR"/>
    <property type="match status" value="1"/>
</dbReference>
<dbReference type="Gene3D" id="1.10.3210.10">
    <property type="entry name" value="Hypothetical protein af1432"/>
    <property type="match status" value="1"/>
</dbReference>
<dbReference type="HAMAP" id="MF_01100">
    <property type="entry name" value="5DNU"/>
    <property type="match status" value="1"/>
</dbReference>
<dbReference type="InterPro" id="IPR003607">
    <property type="entry name" value="HD/PDEase_dom"/>
</dbReference>
<dbReference type="InterPro" id="IPR006674">
    <property type="entry name" value="HD_domain"/>
</dbReference>
<dbReference type="InterPro" id="IPR022971">
    <property type="entry name" value="YfbR"/>
</dbReference>
<dbReference type="InterPro" id="IPR039356">
    <property type="entry name" value="YfbR/HDDC2"/>
</dbReference>
<dbReference type="NCBIfam" id="NF003009">
    <property type="entry name" value="PRK03826.1"/>
    <property type="match status" value="1"/>
</dbReference>
<dbReference type="PANTHER" id="PTHR11845">
    <property type="entry name" value="5'-DEOXYNUCLEOTIDASE HDDC2"/>
    <property type="match status" value="1"/>
</dbReference>
<dbReference type="PANTHER" id="PTHR11845:SF13">
    <property type="entry name" value="5'-DEOXYNUCLEOTIDASE HDDC2"/>
    <property type="match status" value="1"/>
</dbReference>
<dbReference type="Pfam" id="PF12917">
    <property type="entry name" value="YfbR-like"/>
    <property type="match status" value="1"/>
</dbReference>
<dbReference type="SMART" id="SM00471">
    <property type="entry name" value="HDc"/>
    <property type="match status" value="1"/>
</dbReference>
<dbReference type="SUPFAM" id="SSF109604">
    <property type="entry name" value="HD-domain/PDEase-like"/>
    <property type="match status" value="1"/>
</dbReference>
<dbReference type="PROSITE" id="PS51831">
    <property type="entry name" value="HD"/>
    <property type="match status" value="1"/>
</dbReference>